<keyword id="KW-0963">Cytoplasm</keyword>
<keyword id="KW-0488">Methylation</keyword>
<keyword id="KW-0648">Protein biosynthesis</keyword>
<gene>
    <name evidence="1" type="primary">prfB</name>
    <name type="ordered locus">CTLon_0715</name>
</gene>
<name>RF2_CHLTB</name>
<organism>
    <name type="scientific">Chlamydia trachomatis serovar L2b (strain UCH-1/proctitis)</name>
    <dbReference type="NCBI Taxonomy" id="471473"/>
    <lineage>
        <taxon>Bacteria</taxon>
        <taxon>Pseudomonadati</taxon>
        <taxon>Chlamydiota</taxon>
        <taxon>Chlamydiia</taxon>
        <taxon>Chlamydiales</taxon>
        <taxon>Chlamydiaceae</taxon>
        <taxon>Chlamydia/Chlamydophila group</taxon>
        <taxon>Chlamydia</taxon>
    </lineage>
</organism>
<comment type="function">
    <text evidence="1">Peptide chain release factor 2 directs the termination of translation in response to the peptide chain termination codons UGA and UAA.</text>
</comment>
<comment type="subcellular location">
    <subcellularLocation>
        <location evidence="1">Cytoplasm</location>
    </subcellularLocation>
</comment>
<comment type="PTM">
    <text evidence="1">Methylated by PrmC. Methylation increases the termination efficiency of RF2.</text>
</comment>
<comment type="similarity">
    <text evidence="1">Belongs to the prokaryotic/mitochondrial release factor family.</text>
</comment>
<sequence length="368" mass="42421">MHENFDKRLEVLLEGLALTRRSLDPEGKENELKELEQQAVQDGFWDDVARAGKISERIARLKQQLSEFNELKNKVSTIQFFLEDEESSKDLEMQKELEKEFVFCEKKITEWETLRLLSGELDRNSCFLSINAGAGGTESCDWVEMVLRMYMRWASSHSWRVEVIDRLDGEVAGIKHITLKLVGEYAYGYAKAESGVHRLVRISPFDSNAKRHTSFASVEVFPEIDDKIEVEIRPGDIRIDTYRSSGAGGQHVNVTDSAVRITHFPTGIVVSCQNERSQIQNREACMNMLRARIYQKLLQERLEKQNIDRKNKKEISWGSQIRNYVFQPYTLVKDVRTGYEVGNIQAMMDGELLDAFIKAYLVDYGEIT</sequence>
<dbReference type="EMBL" id="AM884177">
    <property type="protein sequence ID" value="CAP07112.1"/>
    <property type="molecule type" value="Genomic_DNA"/>
</dbReference>
<dbReference type="SMR" id="B0BC97"/>
<dbReference type="KEGG" id="ctl:CTLon_0715"/>
<dbReference type="HOGENOM" id="CLU_221953_0_0_0"/>
<dbReference type="Proteomes" id="UP001154401">
    <property type="component" value="Chromosome"/>
</dbReference>
<dbReference type="GO" id="GO:0005737">
    <property type="term" value="C:cytoplasm"/>
    <property type="evidence" value="ECO:0007669"/>
    <property type="project" value="UniProtKB-SubCell"/>
</dbReference>
<dbReference type="GO" id="GO:0016149">
    <property type="term" value="F:translation release factor activity, codon specific"/>
    <property type="evidence" value="ECO:0007669"/>
    <property type="project" value="UniProtKB-UniRule"/>
</dbReference>
<dbReference type="FunFam" id="3.30.160.20:FF:000004">
    <property type="entry name" value="Peptide chain release factor 1"/>
    <property type="match status" value="1"/>
</dbReference>
<dbReference type="Gene3D" id="3.30.160.20">
    <property type="match status" value="1"/>
</dbReference>
<dbReference type="Gene3D" id="3.30.70.1660">
    <property type="match status" value="1"/>
</dbReference>
<dbReference type="Gene3D" id="1.20.58.410">
    <property type="entry name" value="Release factor"/>
    <property type="match status" value="1"/>
</dbReference>
<dbReference type="HAMAP" id="MF_00094">
    <property type="entry name" value="Rel_fac_2"/>
    <property type="match status" value="1"/>
</dbReference>
<dbReference type="InterPro" id="IPR005139">
    <property type="entry name" value="PCRF"/>
</dbReference>
<dbReference type="InterPro" id="IPR000352">
    <property type="entry name" value="Pep_chain_release_fac_I"/>
</dbReference>
<dbReference type="InterPro" id="IPR045853">
    <property type="entry name" value="Pep_chain_release_fac_I_sf"/>
</dbReference>
<dbReference type="InterPro" id="IPR004374">
    <property type="entry name" value="PrfB"/>
</dbReference>
<dbReference type="NCBIfam" id="TIGR00020">
    <property type="entry name" value="prfB"/>
    <property type="match status" value="1"/>
</dbReference>
<dbReference type="PANTHER" id="PTHR43116:SF3">
    <property type="entry name" value="CLASS I PEPTIDE CHAIN RELEASE FACTOR"/>
    <property type="match status" value="1"/>
</dbReference>
<dbReference type="PANTHER" id="PTHR43116">
    <property type="entry name" value="PEPTIDE CHAIN RELEASE FACTOR 2"/>
    <property type="match status" value="1"/>
</dbReference>
<dbReference type="Pfam" id="PF03462">
    <property type="entry name" value="PCRF"/>
    <property type="match status" value="1"/>
</dbReference>
<dbReference type="Pfam" id="PF00472">
    <property type="entry name" value="RF-1"/>
    <property type="match status" value="1"/>
</dbReference>
<dbReference type="SMART" id="SM00937">
    <property type="entry name" value="PCRF"/>
    <property type="match status" value="1"/>
</dbReference>
<dbReference type="SUPFAM" id="SSF75620">
    <property type="entry name" value="Release factor"/>
    <property type="match status" value="1"/>
</dbReference>
<dbReference type="PROSITE" id="PS00745">
    <property type="entry name" value="RF_PROK_I"/>
    <property type="match status" value="1"/>
</dbReference>
<accession>B0BC97</accession>
<protein>
    <recommendedName>
        <fullName evidence="1">Peptide chain release factor 2</fullName>
        <shortName evidence="1">RF-2</shortName>
    </recommendedName>
</protein>
<proteinExistence type="inferred from homology"/>
<feature type="chain" id="PRO_1000093537" description="Peptide chain release factor 2">
    <location>
        <begin position="1"/>
        <end position="368"/>
    </location>
</feature>
<feature type="modified residue" description="N5-methylglutamine" evidence="1">
    <location>
        <position position="250"/>
    </location>
</feature>
<evidence type="ECO:0000255" key="1">
    <source>
        <dbReference type="HAMAP-Rule" id="MF_00094"/>
    </source>
</evidence>
<reference key="1">
    <citation type="journal article" date="2008" name="Genome Res.">
        <title>Chlamydia trachomatis: genome sequence analysis of lymphogranuloma venereum isolates.</title>
        <authorList>
            <person name="Thomson N.R."/>
            <person name="Holden M.T.G."/>
            <person name="Carder C."/>
            <person name="Lennard N."/>
            <person name="Lockey S.J."/>
            <person name="Marsh P."/>
            <person name="Skipp P."/>
            <person name="O'Connor C.D."/>
            <person name="Goodhead I."/>
            <person name="Norbertzcak H."/>
            <person name="Harris B."/>
            <person name="Ormond D."/>
            <person name="Rance R."/>
            <person name="Quail M.A."/>
            <person name="Parkhill J."/>
            <person name="Stephens R.S."/>
            <person name="Clarke I.N."/>
        </authorList>
    </citation>
    <scope>NUCLEOTIDE SEQUENCE [LARGE SCALE GENOMIC DNA]</scope>
    <source>
        <strain>UCH-1/proctitis</strain>
    </source>
</reference>